<comment type="function">
    <text evidence="2">One of the essential components for the initiation of protein synthesis. Protects formylmethionyl-tRNA from spontaneous hydrolysis and promotes its binding to the 30S ribosomal subunits. Also involved in the hydrolysis of GTP during the formation of the 70S ribosomal complex.</text>
</comment>
<comment type="subcellular location">
    <subcellularLocation>
        <location evidence="2">Cytoplasm</location>
    </subcellularLocation>
</comment>
<comment type="similarity">
    <text evidence="2">Belongs to the TRAFAC class translation factor GTPase superfamily. Classic translation factor GTPase family. IF-2 subfamily.</text>
</comment>
<reference key="1">
    <citation type="journal article" date="2004" name="Nat. Genet.">
        <title>Evidence in the Legionella pneumophila genome for exploitation of host cell functions and high genome plasticity.</title>
        <authorList>
            <person name="Cazalet C."/>
            <person name="Rusniok C."/>
            <person name="Brueggemann H."/>
            <person name="Zidane N."/>
            <person name="Magnier A."/>
            <person name="Ma L."/>
            <person name="Tichit M."/>
            <person name="Jarraud S."/>
            <person name="Bouchier C."/>
            <person name="Vandenesch F."/>
            <person name="Kunst F."/>
            <person name="Etienne J."/>
            <person name="Glaser P."/>
            <person name="Buchrieser C."/>
        </authorList>
    </citation>
    <scope>NUCLEOTIDE SEQUENCE [LARGE SCALE GENOMIC DNA]</scope>
    <source>
        <strain>Paris</strain>
    </source>
</reference>
<gene>
    <name evidence="2" type="primary">infB</name>
    <name type="ordered locus">lpp2820</name>
</gene>
<sequence length="868" mass="94699">MADVTVKQLAQVVGIPVERLLNQLQEAGLSFTDDQQTVNEEQKRILLNHLKGSSNRDISAAPERITLRRKSMSQVTVGHDMHSGKTVNIEVRKKKTFIKRSAIPEQAEIEEPVVPPVVEEPVHEEITVVSEVSAETPELKETEEHPVIEPVAELDETVKEEEKISLEENTAESQDELTHANTDVIENLVDVVEEAIPASKKEEVKPEKVSKKKHLEQTDSDISEFKKGKKKPKYHTFEHDEEEQELHRRGGRSKFKKKKGTEKSDKYREAEETLTHGFALPTAPIVREVLIPETITVAELAKRMSVKAAEVIKVMMSLGAMATINQVIDQETSVIVVEEMGHKPVIIKEDAVETGLGEAISKGTKTEGRAPVVTIMGHVDHGKTSLLDYIRRTKVAAGEAGGITQHIGAYHVSTPKGNITFLDTPGHAAFTAMRARGAQATDIVILIVAADDGVKPQTIEAIQHAKAAKVPIIVAINKMDKPDADPERVMNELSVQEVIPEAWGGDTMFVNISAKSGMGIDDLLDAILLQSEVLELKAVTDGAAKGVVIESRLDKGRGPVATVLVQSGTLHKGDILLAGFQYGRVRALVSDNGDLVDSAGPSIPVEVLGLSAIPHAGDEAVVVPDEKKAREVALFRQGRFRDVKLARRQKTSIEGIMENMTATESKVLNIVLKADVQGSLEAISDALTKLSTDEVKVEVISSGVGGITESDVHLAIASNAILIGFNVRADGTAKRLAEQESVSIHYYSVIYDIVDQIKGALTGMLAPQFKEEIVGIAEVRDVFKSPKIGAIAGCMVIEGVVKRNNPIRVLRSNVVIYEGTLESLRRFKDDVLEVRQGFECGIGVKNYNDVKPGDLIEVFETVEIKRDL</sequence>
<protein>
    <recommendedName>
        <fullName evidence="2">Translation initiation factor IF-2</fullName>
    </recommendedName>
</protein>
<evidence type="ECO:0000250" key="1"/>
<evidence type="ECO:0000255" key="2">
    <source>
        <dbReference type="HAMAP-Rule" id="MF_00100"/>
    </source>
</evidence>
<evidence type="ECO:0000256" key="3">
    <source>
        <dbReference type="SAM" id="MobiDB-lite"/>
    </source>
</evidence>
<feature type="chain" id="PRO_0000228209" description="Translation initiation factor IF-2">
    <location>
        <begin position="1"/>
        <end position="868"/>
    </location>
</feature>
<feature type="domain" description="tr-type G">
    <location>
        <begin position="368"/>
        <end position="537"/>
    </location>
</feature>
<feature type="region of interest" description="Disordered" evidence="3">
    <location>
        <begin position="199"/>
        <end position="269"/>
    </location>
</feature>
<feature type="region of interest" description="G1" evidence="1">
    <location>
        <begin position="377"/>
        <end position="384"/>
    </location>
</feature>
<feature type="region of interest" description="G2" evidence="1">
    <location>
        <begin position="402"/>
        <end position="406"/>
    </location>
</feature>
<feature type="region of interest" description="G3" evidence="1">
    <location>
        <begin position="423"/>
        <end position="426"/>
    </location>
</feature>
<feature type="region of interest" description="G4" evidence="1">
    <location>
        <begin position="477"/>
        <end position="480"/>
    </location>
</feature>
<feature type="region of interest" description="G5" evidence="1">
    <location>
        <begin position="513"/>
        <end position="515"/>
    </location>
</feature>
<feature type="compositionally biased region" description="Basic and acidic residues" evidence="3">
    <location>
        <begin position="199"/>
        <end position="209"/>
    </location>
</feature>
<feature type="compositionally biased region" description="Basic residues" evidence="3">
    <location>
        <begin position="249"/>
        <end position="260"/>
    </location>
</feature>
<feature type="binding site" evidence="2">
    <location>
        <begin position="377"/>
        <end position="384"/>
    </location>
    <ligand>
        <name>GTP</name>
        <dbReference type="ChEBI" id="CHEBI:37565"/>
    </ligand>
</feature>
<feature type="binding site" evidence="2">
    <location>
        <begin position="423"/>
        <end position="427"/>
    </location>
    <ligand>
        <name>GTP</name>
        <dbReference type="ChEBI" id="CHEBI:37565"/>
    </ligand>
</feature>
<feature type="binding site" evidence="2">
    <location>
        <begin position="477"/>
        <end position="480"/>
    </location>
    <ligand>
        <name>GTP</name>
        <dbReference type="ChEBI" id="CHEBI:37565"/>
    </ligand>
</feature>
<proteinExistence type="inferred from homology"/>
<name>IF2_LEGPA</name>
<accession>Q5X1C3</accession>
<dbReference type="EMBL" id="CR628336">
    <property type="protein sequence ID" value="CAH13973.1"/>
    <property type="molecule type" value="Genomic_DNA"/>
</dbReference>
<dbReference type="RefSeq" id="WP_015961801.1">
    <property type="nucleotide sequence ID" value="NC_006368.1"/>
</dbReference>
<dbReference type="SMR" id="Q5X1C3"/>
<dbReference type="KEGG" id="lpp:lpp2820"/>
<dbReference type="LegioList" id="lpp2820"/>
<dbReference type="HOGENOM" id="CLU_006301_6_1_6"/>
<dbReference type="GO" id="GO:0005829">
    <property type="term" value="C:cytosol"/>
    <property type="evidence" value="ECO:0007669"/>
    <property type="project" value="TreeGrafter"/>
</dbReference>
<dbReference type="GO" id="GO:0005525">
    <property type="term" value="F:GTP binding"/>
    <property type="evidence" value="ECO:0007669"/>
    <property type="project" value="UniProtKB-KW"/>
</dbReference>
<dbReference type="GO" id="GO:0003924">
    <property type="term" value="F:GTPase activity"/>
    <property type="evidence" value="ECO:0007669"/>
    <property type="project" value="UniProtKB-UniRule"/>
</dbReference>
<dbReference type="GO" id="GO:0097216">
    <property type="term" value="F:guanosine tetraphosphate binding"/>
    <property type="evidence" value="ECO:0007669"/>
    <property type="project" value="UniProtKB-ARBA"/>
</dbReference>
<dbReference type="GO" id="GO:0003743">
    <property type="term" value="F:translation initiation factor activity"/>
    <property type="evidence" value="ECO:0007669"/>
    <property type="project" value="UniProtKB-UniRule"/>
</dbReference>
<dbReference type="CDD" id="cd01887">
    <property type="entry name" value="IF2_eIF5B"/>
    <property type="match status" value="1"/>
</dbReference>
<dbReference type="CDD" id="cd03702">
    <property type="entry name" value="IF2_mtIF2_II"/>
    <property type="match status" value="1"/>
</dbReference>
<dbReference type="CDD" id="cd03692">
    <property type="entry name" value="mtIF2_IVc"/>
    <property type="match status" value="1"/>
</dbReference>
<dbReference type="FunFam" id="2.40.30.10:FF:000007">
    <property type="entry name" value="Translation initiation factor IF-2"/>
    <property type="match status" value="1"/>
</dbReference>
<dbReference type="FunFam" id="2.40.30.10:FF:000008">
    <property type="entry name" value="Translation initiation factor IF-2"/>
    <property type="match status" value="1"/>
</dbReference>
<dbReference type="FunFam" id="3.40.50.10050:FF:000001">
    <property type="entry name" value="Translation initiation factor IF-2"/>
    <property type="match status" value="1"/>
</dbReference>
<dbReference type="FunFam" id="3.40.50.300:FF:000019">
    <property type="entry name" value="Translation initiation factor IF-2"/>
    <property type="match status" value="1"/>
</dbReference>
<dbReference type="Gene3D" id="3.40.50.300">
    <property type="entry name" value="P-loop containing nucleotide triphosphate hydrolases"/>
    <property type="match status" value="1"/>
</dbReference>
<dbReference type="Gene3D" id="3.30.56.50">
    <property type="entry name" value="Putative DNA-binding domain, N-terminal subdomain of bacterial translation initiation factor IF2"/>
    <property type="match status" value="1"/>
</dbReference>
<dbReference type="Gene3D" id="2.40.30.10">
    <property type="entry name" value="Translation factors"/>
    <property type="match status" value="2"/>
</dbReference>
<dbReference type="Gene3D" id="3.40.50.10050">
    <property type="entry name" value="Translation initiation factor IF- 2, domain 3"/>
    <property type="match status" value="1"/>
</dbReference>
<dbReference type="HAMAP" id="MF_00100_B">
    <property type="entry name" value="IF_2_B"/>
    <property type="match status" value="1"/>
</dbReference>
<dbReference type="InterPro" id="IPR009061">
    <property type="entry name" value="DNA-bd_dom_put_sf"/>
</dbReference>
<dbReference type="InterPro" id="IPR053905">
    <property type="entry name" value="EF-G-like_DII"/>
</dbReference>
<dbReference type="InterPro" id="IPR004161">
    <property type="entry name" value="EFTu-like_2"/>
</dbReference>
<dbReference type="InterPro" id="IPR013575">
    <property type="entry name" value="IF2_assoc_dom_bac"/>
</dbReference>
<dbReference type="InterPro" id="IPR044145">
    <property type="entry name" value="IF2_II"/>
</dbReference>
<dbReference type="InterPro" id="IPR006847">
    <property type="entry name" value="IF2_N"/>
</dbReference>
<dbReference type="InterPro" id="IPR027417">
    <property type="entry name" value="P-loop_NTPase"/>
</dbReference>
<dbReference type="InterPro" id="IPR005225">
    <property type="entry name" value="Small_GTP-bd"/>
</dbReference>
<dbReference type="InterPro" id="IPR000795">
    <property type="entry name" value="T_Tr_GTP-bd_dom"/>
</dbReference>
<dbReference type="InterPro" id="IPR000178">
    <property type="entry name" value="TF_IF2_bacterial-like"/>
</dbReference>
<dbReference type="InterPro" id="IPR015760">
    <property type="entry name" value="TIF_IF2"/>
</dbReference>
<dbReference type="InterPro" id="IPR023115">
    <property type="entry name" value="TIF_IF2_dom3"/>
</dbReference>
<dbReference type="InterPro" id="IPR036925">
    <property type="entry name" value="TIF_IF2_dom3_sf"/>
</dbReference>
<dbReference type="InterPro" id="IPR009000">
    <property type="entry name" value="Transl_B-barrel_sf"/>
</dbReference>
<dbReference type="NCBIfam" id="TIGR00487">
    <property type="entry name" value="IF-2"/>
    <property type="match status" value="1"/>
</dbReference>
<dbReference type="NCBIfam" id="TIGR00231">
    <property type="entry name" value="small_GTP"/>
    <property type="match status" value="1"/>
</dbReference>
<dbReference type="PANTHER" id="PTHR43381:SF5">
    <property type="entry name" value="TR-TYPE G DOMAIN-CONTAINING PROTEIN"/>
    <property type="match status" value="1"/>
</dbReference>
<dbReference type="PANTHER" id="PTHR43381">
    <property type="entry name" value="TRANSLATION INITIATION FACTOR IF-2-RELATED"/>
    <property type="match status" value="1"/>
</dbReference>
<dbReference type="Pfam" id="PF22042">
    <property type="entry name" value="EF-G_D2"/>
    <property type="match status" value="1"/>
</dbReference>
<dbReference type="Pfam" id="PF00009">
    <property type="entry name" value="GTP_EFTU"/>
    <property type="match status" value="1"/>
</dbReference>
<dbReference type="Pfam" id="PF03144">
    <property type="entry name" value="GTP_EFTU_D2"/>
    <property type="match status" value="1"/>
</dbReference>
<dbReference type="Pfam" id="PF11987">
    <property type="entry name" value="IF-2"/>
    <property type="match status" value="1"/>
</dbReference>
<dbReference type="Pfam" id="PF08364">
    <property type="entry name" value="IF2_assoc"/>
    <property type="match status" value="1"/>
</dbReference>
<dbReference type="Pfam" id="PF04760">
    <property type="entry name" value="IF2_N"/>
    <property type="match status" value="2"/>
</dbReference>
<dbReference type="SUPFAM" id="SSF52156">
    <property type="entry name" value="Initiation factor IF2/eIF5b, domain 3"/>
    <property type="match status" value="1"/>
</dbReference>
<dbReference type="SUPFAM" id="SSF52540">
    <property type="entry name" value="P-loop containing nucleoside triphosphate hydrolases"/>
    <property type="match status" value="1"/>
</dbReference>
<dbReference type="SUPFAM" id="SSF46955">
    <property type="entry name" value="Putative DNA-binding domain"/>
    <property type="match status" value="1"/>
</dbReference>
<dbReference type="SUPFAM" id="SSF50447">
    <property type="entry name" value="Translation proteins"/>
    <property type="match status" value="2"/>
</dbReference>
<dbReference type="PROSITE" id="PS51722">
    <property type="entry name" value="G_TR_2"/>
    <property type="match status" value="1"/>
</dbReference>
<dbReference type="PROSITE" id="PS01176">
    <property type="entry name" value="IF2"/>
    <property type="match status" value="1"/>
</dbReference>
<keyword id="KW-0963">Cytoplasm</keyword>
<keyword id="KW-0342">GTP-binding</keyword>
<keyword id="KW-0396">Initiation factor</keyword>
<keyword id="KW-0547">Nucleotide-binding</keyword>
<keyword id="KW-0648">Protein biosynthesis</keyword>
<organism>
    <name type="scientific">Legionella pneumophila (strain Paris)</name>
    <dbReference type="NCBI Taxonomy" id="297246"/>
    <lineage>
        <taxon>Bacteria</taxon>
        <taxon>Pseudomonadati</taxon>
        <taxon>Pseudomonadota</taxon>
        <taxon>Gammaproteobacteria</taxon>
        <taxon>Legionellales</taxon>
        <taxon>Legionellaceae</taxon>
        <taxon>Legionella</taxon>
    </lineage>
</organism>